<feature type="chain" id="PRO_0000168407" description="L-lactate dehydrogenase">
    <location>
        <begin position="1"/>
        <end position="311"/>
    </location>
</feature>
<feature type="active site" description="Proton acceptor" evidence="1">
    <location>
        <position position="173"/>
    </location>
</feature>
<feature type="binding site" evidence="1">
    <location>
        <position position="12"/>
    </location>
    <ligand>
        <name>NAD(+)</name>
        <dbReference type="ChEBI" id="CHEBI:57540"/>
    </ligand>
</feature>
<feature type="binding site" evidence="1">
    <location>
        <position position="33"/>
    </location>
    <ligand>
        <name>NAD(+)</name>
        <dbReference type="ChEBI" id="CHEBI:57540"/>
    </ligand>
</feature>
<feature type="binding site" evidence="1">
    <location>
        <position position="38"/>
    </location>
    <ligand>
        <name>NAD(+)</name>
        <dbReference type="ChEBI" id="CHEBI:57540"/>
    </ligand>
</feature>
<feature type="binding site" evidence="1">
    <location>
        <position position="63"/>
    </location>
    <ligand>
        <name>NAD(+)</name>
        <dbReference type="ChEBI" id="CHEBI:57540"/>
    </ligand>
</feature>
<feature type="binding site" evidence="1">
    <location>
        <begin position="77"/>
        <end position="78"/>
    </location>
    <ligand>
        <name>NAD(+)</name>
        <dbReference type="ChEBI" id="CHEBI:57540"/>
    </ligand>
</feature>
<feature type="binding site" evidence="1">
    <location>
        <position position="80"/>
    </location>
    <ligand>
        <name>substrate</name>
    </ligand>
</feature>
<feature type="binding site" evidence="1">
    <location>
        <position position="86"/>
    </location>
    <ligand>
        <name>substrate</name>
    </ligand>
</feature>
<feature type="binding site" evidence="1">
    <location>
        <position position="99"/>
    </location>
    <ligand>
        <name>NAD(+)</name>
        <dbReference type="ChEBI" id="CHEBI:57540"/>
    </ligand>
</feature>
<feature type="binding site" evidence="1">
    <location>
        <begin position="116"/>
        <end position="118"/>
    </location>
    <ligand>
        <name>NAD(+)</name>
        <dbReference type="ChEBI" id="CHEBI:57540"/>
    </ligand>
</feature>
<feature type="binding site" evidence="1">
    <location>
        <begin position="118"/>
        <end position="121"/>
    </location>
    <ligand>
        <name>substrate</name>
    </ligand>
</feature>
<feature type="binding site" evidence="1">
    <location>
        <position position="141"/>
    </location>
    <ligand>
        <name>NAD(+)</name>
        <dbReference type="ChEBI" id="CHEBI:57540"/>
    </ligand>
</feature>
<feature type="binding site" evidence="1">
    <location>
        <begin position="146"/>
        <end position="149"/>
    </location>
    <ligand>
        <name>substrate</name>
    </ligand>
</feature>
<feature type="binding site" evidence="1">
    <location>
        <position position="151"/>
    </location>
    <ligand>
        <name>beta-D-fructose 1,6-bisphosphate</name>
        <dbReference type="ChEBI" id="CHEBI:32966"/>
        <note>allosteric activator</note>
    </ligand>
</feature>
<feature type="binding site" evidence="1">
    <location>
        <position position="166"/>
    </location>
    <ligand>
        <name>beta-D-fructose 1,6-bisphosphate</name>
        <dbReference type="ChEBI" id="CHEBI:32966"/>
        <note>allosteric activator</note>
    </ligand>
</feature>
<feature type="binding site" evidence="1">
    <location>
        <position position="228"/>
    </location>
    <ligand>
        <name>substrate</name>
    </ligand>
</feature>
<feature type="modified residue" description="Phosphotyrosine" evidence="1">
    <location>
        <position position="219"/>
    </location>
</feature>
<feature type="sequence conflict" description="In Ref. 1; AAP34686." evidence="2" ref="1">
    <original>P</original>
    <variation>L</variation>
    <location>
        <position position="51"/>
    </location>
</feature>
<sequence length="311" mass="33815">MSKVAIIGSGFVGATSAFTLALSGTVTDIVLVDLNKDKAIGDALDISHGIPLIQPVNVYAGDYKDVKGADVIVVTAGAAQKPGETRLDLVKKNTAIFKSMIPELLKYNDKAIYLIVTNPVDILTYVTYKISGLPWGRVFGSGTVLDSSRFRYLLSKHCNIDPRNVHGRIIGEHGDTEFAAWSITNISGISFNEYCSICGRVCNTNFRKEVEEEVVNAAYKIIDKKGATYYAVAVAVRRIVECILRDENSILTVSSPLNGQYGVKDVSLSLPSIVGRNGVARILDLPLSDEEVEKFRHSASVMADVIKQLDI</sequence>
<protein>
    <recommendedName>
        <fullName evidence="1">L-lactate dehydrogenase</fullName>
        <shortName evidence="1">L-LDH</shortName>
        <ecNumber evidence="1">1.1.1.27</ecNumber>
    </recommendedName>
</protein>
<proteinExistence type="inferred from homology"/>
<evidence type="ECO:0000255" key="1">
    <source>
        <dbReference type="HAMAP-Rule" id="MF_00488"/>
    </source>
</evidence>
<evidence type="ECO:0000305" key="2"/>
<name>LDH_THESW</name>
<dbReference type="EC" id="1.1.1.27" evidence="1"/>
<dbReference type="EMBL" id="AY278026">
    <property type="protein sequence ID" value="AAP34686.1"/>
    <property type="molecule type" value="Genomic_DNA"/>
</dbReference>
<dbReference type="EMBL" id="CP003184">
    <property type="protein sequence ID" value="AFK85215.1"/>
    <property type="molecule type" value="Genomic_DNA"/>
</dbReference>
<dbReference type="RefSeq" id="WP_014757138.1">
    <property type="nucleotide sequence ID" value="NC_017992.1"/>
</dbReference>
<dbReference type="SMR" id="Q7X5C9"/>
<dbReference type="STRING" id="1094508.Tsac_0179"/>
<dbReference type="KEGG" id="tsh:Tsac_0179"/>
<dbReference type="PATRIC" id="fig|1094508.3.peg.179"/>
<dbReference type="eggNOG" id="COG0039">
    <property type="taxonomic scope" value="Bacteria"/>
</dbReference>
<dbReference type="UniPathway" id="UPA00554">
    <property type="reaction ID" value="UER00611"/>
</dbReference>
<dbReference type="Proteomes" id="UP000006178">
    <property type="component" value="Chromosome"/>
</dbReference>
<dbReference type="GO" id="GO:0005737">
    <property type="term" value="C:cytoplasm"/>
    <property type="evidence" value="ECO:0007669"/>
    <property type="project" value="UniProtKB-SubCell"/>
</dbReference>
<dbReference type="GO" id="GO:0004459">
    <property type="term" value="F:L-lactate dehydrogenase activity"/>
    <property type="evidence" value="ECO:0007669"/>
    <property type="project" value="UniProtKB-UniRule"/>
</dbReference>
<dbReference type="GO" id="GO:0006096">
    <property type="term" value="P:glycolytic process"/>
    <property type="evidence" value="ECO:0007669"/>
    <property type="project" value="UniProtKB-UniRule"/>
</dbReference>
<dbReference type="GO" id="GO:0006089">
    <property type="term" value="P:lactate metabolic process"/>
    <property type="evidence" value="ECO:0007669"/>
    <property type="project" value="TreeGrafter"/>
</dbReference>
<dbReference type="CDD" id="cd05292">
    <property type="entry name" value="LDH_2"/>
    <property type="match status" value="1"/>
</dbReference>
<dbReference type="FunFam" id="3.40.50.720:FF:000018">
    <property type="entry name" value="Malate dehydrogenase"/>
    <property type="match status" value="1"/>
</dbReference>
<dbReference type="Gene3D" id="3.90.110.10">
    <property type="entry name" value="Lactate dehydrogenase/glycoside hydrolase, family 4, C-terminal"/>
    <property type="match status" value="1"/>
</dbReference>
<dbReference type="Gene3D" id="3.40.50.720">
    <property type="entry name" value="NAD(P)-binding Rossmann-like Domain"/>
    <property type="match status" value="1"/>
</dbReference>
<dbReference type="HAMAP" id="MF_00488">
    <property type="entry name" value="Lactate_dehydrog"/>
    <property type="match status" value="1"/>
</dbReference>
<dbReference type="InterPro" id="IPR001557">
    <property type="entry name" value="L-lactate/malate_DH"/>
</dbReference>
<dbReference type="InterPro" id="IPR011304">
    <property type="entry name" value="L-lactate_DH"/>
</dbReference>
<dbReference type="InterPro" id="IPR018177">
    <property type="entry name" value="L-lactate_DH_AS"/>
</dbReference>
<dbReference type="InterPro" id="IPR022383">
    <property type="entry name" value="Lactate/malate_DH_C"/>
</dbReference>
<dbReference type="InterPro" id="IPR001236">
    <property type="entry name" value="Lactate/malate_DH_N"/>
</dbReference>
<dbReference type="InterPro" id="IPR015955">
    <property type="entry name" value="Lactate_DH/Glyco_Ohase_4_C"/>
</dbReference>
<dbReference type="InterPro" id="IPR036291">
    <property type="entry name" value="NAD(P)-bd_dom_sf"/>
</dbReference>
<dbReference type="NCBIfam" id="TIGR01771">
    <property type="entry name" value="L-LDH-NAD"/>
    <property type="match status" value="1"/>
</dbReference>
<dbReference type="NCBIfam" id="NF000824">
    <property type="entry name" value="PRK00066.1"/>
    <property type="match status" value="1"/>
</dbReference>
<dbReference type="NCBIfam" id="NF004863">
    <property type="entry name" value="PRK06223.1"/>
    <property type="match status" value="1"/>
</dbReference>
<dbReference type="PANTHER" id="PTHR43128">
    <property type="entry name" value="L-2-HYDROXYCARBOXYLATE DEHYDROGENASE (NAD(P)(+))"/>
    <property type="match status" value="1"/>
</dbReference>
<dbReference type="PANTHER" id="PTHR43128:SF16">
    <property type="entry name" value="L-LACTATE DEHYDROGENASE"/>
    <property type="match status" value="1"/>
</dbReference>
<dbReference type="Pfam" id="PF02866">
    <property type="entry name" value="Ldh_1_C"/>
    <property type="match status" value="1"/>
</dbReference>
<dbReference type="Pfam" id="PF00056">
    <property type="entry name" value="Ldh_1_N"/>
    <property type="match status" value="1"/>
</dbReference>
<dbReference type="PIRSF" id="PIRSF000102">
    <property type="entry name" value="Lac_mal_DH"/>
    <property type="match status" value="1"/>
</dbReference>
<dbReference type="PRINTS" id="PR00086">
    <property type="entry name" value="LLDHDRGNASE"/>
</dbReference>
<dbReference type="SUPFAM" id="SSF56327">
    <property type="entry name" value="LDH C-terminal domain-like"/>
    <property type="match status" value="1"/>
</dbReference>
<dbReference type="SUPFAM" id="SSF51735">
    <property type="entry name" value="NAD(P)-binding Rossmann-fold domains"/>
    <property type="match status" value="1"/>
</dbReference>
<dbReference type="PROSITE" id="PS00064">
    <property type="entry name" value="L_LDH"/>
    <property type="match status" value="1"/>
</dbReference>
<reference key="1">
    <citation type="journal article" date="2004" name="Appl. Microbiol. Biotechnol.">
        <title>Cloning of l-lactate dehydrogenase and elimination of lactic acid production via gene knockout in Thermoanaerobacterium saccharolyticum JW/SL-YS485.</title>
        <authorList>
            <person name="Desai S.G."/>
            <person name="Guerinot M.L."/>
            <person name="Lynd L.R."/>
        </authorList>
    </citation>
    <scope>NUCLEOTIDE SEQUENCE [GENOMIC DNA]</scope>
    <source>
        <strain>DSM 8691 / JW/SL-YS485</strain>
    </source>
</reference>
<reference key="2">
    <citation type="submission" date="2011-12" db="EMBL/GenBank/DDBJ databases">
        <title>Thermoanaerobacterium saccharolyticum JW/SL-YS485.</title>
        <authorList>
            <person name="Brown S.D."/>
            <person name="Land M.L."/>
            <person name="Herring C.D."/>
        </authorList>
    </citation>
    <scope>NUCLEOTIDE SEQUENCE [LARGE SCALE GENOMIC DNA]</scope>
    <source>
        <strain>DSM 8691 / JW/SL-YS485</strain>
    </source>
</reference>
<organism>
    <name type="scientific">Thermoanaerobacterium saccharolyticum (strain DSM 8691 / JW/SL-YS485)</name>
    <dbReference type="NCBI Taxonomy" id="1094508"/>
    <lineage>
        <taxon>Bacteria</taxon>
        <taxon>Bacillati</taxon>
        <taxon>Bacillota</taxon>
        <taxon>Clostridia</taxon>
        <taxon>Thermoanaerobacterales</taxon>
        <taxon>Thermoanaerobacteraceae</taxon>
        <taxon>Thermoanaerobacterium</taxon>
    </lineage>
</organism>
<keyword id="KW-0021">Allosteric enzyme</keyword>
<keyword id="KW-0963">Cytoplasm</keyword>
<keyword id="KW-0520">NAD</keyword>
<keyword id="KW-0560">Oxidoreductase</keyword>
<keyword id="KW-0597">Phosphoprotein</keyword>
<comment type="function">
    <text evidence="1">Catalyzes the conversion of lactate to pyruvate.</text>
</comment>
<comment type="catalytic activity">
    <reaction evidence="1">
        <text>(S)-lactate + NAD(+) = pyruvate + NADH + H(+)</text>
        <dbReference type="Rhea" id="RHEA:23444"/>
        <dbReference type="ChEBI" id="CHEBI:15361"/>
        <dbReference type="ChEBI" id="CHEBI:15378"/>
        <dbReference type="ChEBI" id="CHEBI:16651"/>
        <dbReference type="ChEBI" id="CHEBI:57540"/>
        <dbReference type="ChEBI" id="CHEBI:57945"/>
        <dbReference type="EC" id="1.1.1.27"/>
    </reaction>
</comment>
<comment type="activity regulation">
    <text evidence="1">Allosterically activated by fructose 1,6-bisphosphate (FBP).</text>
</comment>
<comment type="pathway">
    <text evidence="1">Fermentation; pyruvate fermentation to lactate; (S)-lactate from pyruvate: step 1/1.</text>
</comment>
<comment type="subunit">
    <text evidence="1">Homotetramer.</text>
</comment>
<comment type="subcellular location">
    <subcellularLocation>
        <location evidence="1">Cytoplasm</location>
    </subcellularLocation>
</comment>
<comment type="similarity">
    <text evidence="1">Belongs to the LDH/MDH superfamily. LDH family.</text>
</comment>
<gene>
    <name evidence="1" type="primary">ldh</name>
    <name type="ordered locus">Tsac_0179</name>
</gene>
<accession>Q7X5C9</accession>
<accession>I3VRS0</accession>